<keyword id="KW-0903">Direct protein sequencing</keyword>
<keyword id="KW-1015">Disulfide bond</keyword>
<keyword id="KW-0255">Endonuclease</keyword>
<keyword id="KW-0325">Glycoprotein</keyword>
<keyword id="KW-0378">Hydrolase</keyword>
<keyword id="KW-0456">Lyase</keyword>
<keyword id="KW-0540">Nuclease</keyword>
<keyword id="KW-0732">Signal</keyword>
<sequence>MGVTGMTYMFTMVFSLIVLILSSSTVGYDYFQFTQQYQPAVCNSNPTPCNDPTDKLFTVHGLWPSNRNGPDPEKCKTTALNSQKIGNMTAQLEIIWPNVLNRSDHVGFWEKEWIKHGTCGYPTIKDDMHYLQTVIRMYITQKQNVSAILSKAAIQPNGTNRPLVDIENAIRRGTNNTKPKFKCQKNTRTTTELVEVTLCSDRDLKKFINCPHGPPQGSRFSCPSSVQY</sequence>
<accession>O80322</accession>
<name>RNS1_PYRPY</name>
<evidence type="ECO:0000250" key="1"/>
<evidence type="ECO:0000250" key="2">
    <source>
        <dbReference type="UniProtKB" id="P08056"/>
    </source>
</evidence>
<evidence type="ECO:0000250" key="3">
    <source>
        <dbReference type="UniProtKB" id="P23540"/>
    </source>
</evidence>
<evidence type="ECO:0000250" key="4">
    <source>
        <dbReference type="UniProtKB" id="Q7SID5"/>
    </source>
</evidence>
<evidence type="ECO:0000255" key="5"/>
<evidence type="ECO:0000255" key="6">
    <source>
        <dbReference type="PROSITE-ProRule" id="PRU00498"/>
    </source>
</evidence>
<evidence type="ECO:0000255" key="7">
    <source>
        <dbReference type="PROSITE-ProRule" id="PRU10045"/>
    </source>
</evidence>
<evidence type="ECO:0000255" key="8">
    <source>
        <dbReference type="PROSITE-ProRule" id="PRU10046"/>
    </source>
</evidence>
<evidence type="ECO:0000269" key="9">
    <source>
    </source>
</evidence>
<evidence type="ECO:0000305" key="10"/>
<proteinExistence type="evidence at protein level"/>
<organism>
    <name type="scientific">Pyrus pyrifolia</name>
    <name type="common">Chinese pear</name>
    <name type="synonym">Pyrus serotina</name>
    <dbReference type="NCBI Taxonomy" id="3767"/>
    <lineage>
        <taxon>Eukaryota</taxon>
        <taxon>Viridiplantae</taxon>
        <taxon>Streptophyta</taxon>
        <taxon>Embryophyta</taxon>
        <taxon>Tracheophyta</taxon>
        <taxon>Spermatophyta</taxon>
        <taxon>Magnoliopsida</taxon>
        <taxon>eudicotyledons</taxon>
        <taxon>Gunneridae</taxon>
        <taxon>Pentapetalae</taxon>
        <taxon>rosids</taxon>
        <taxon>fabids</taxon>
        <taxon>Rosales</taxon>
        <taxon>Rosaceae</taxon>
        <taxon>Amygdaloideae</taxon>
        <taxon>Maleae</taxon>
        <taxon>Pyrus</taxon>
    </lineage>
</organism>
<reference key="1">
    <citation type="journal article" date="1998" name="Plant Mol. Biol.">
        <title>Primary structural features of rosaceous S-RNases associated with gametophytic self-incompatibility.</title>
        <authorList>
            <person name="Ishimizu T."/>
            <person name="Shinkawa T."/>
            <person name="Sakiyama F."/>
            <person name="Norioka S."/>
        </authorList>
    </citation>
    <scope>NUCLEOTIDE SEQUENCE [MRNA]</scope>
    <scope>PARTIAL PROTEIN SEQUENCE</scope>
    <source>
        <strain>cv. Imamuraaki</strain>
        <tissue>Style</tissue>
    </source>
</reference>
<reference key="2">
    <citation type="journal article" date="1999" name="Eur. J. Biochem.">
        <title>Presence of asparagine-linked N-acetylglucosamine and chitobiose in Pyrus pyrifolia S-RNases associated with gametophytic self-incompatibility.</title>
        <authorList>
            <person name="Ishimizu T."/>
            <person name="Mitsukami Y."/>
            <person name="Shinkawa T."/>
            <person name="Natsuka S."/>
            <person name="Hase S."/>
            <person name="Miyagi M."/>
            <person name="Sakiyama F."/>
            <person name="Norioka S."/>
        </authorList>
    </citation>
    <scope>GLYCOSYLATION AT ASN-87; ASN-101; ASN-144; ASN-157 AND ASN-175</scope>
    <scope>STRUCTURE OF CARBOHYDRATES</scope>
    <source>
        <strain>cv. Imamuraaki</strain>
        <tissue>Style</tissue>
    </source>
</reference>
<protein>
    <recommendedName>
        <fullName>Ribonuclease S-1</fullName>
        <ecNumber evidence="8">4.6.1.19</ecNumber>
    </recommendedName>
    <alternativeName>
        <fullName>S1-RNase</fullName>
    </alternativeName>
</protein>
<feature type="signal peptide" evidence="5">
    <location>
        <begin position="1"/>
        <end position="27"/>
    </location>
</feature>
<feature type="chain" id="PRO_0000030977" description="Ribonuclease S-1">
    <location>
        <begin position="28"/>
        <end position="228"/>
    </location>
</feature>
<feature type="active site" description="Proton donor" evidence="4 7">
    <location>
        <position position="60"/>
    </location>
</feature>
<feature type="active site" evidence="7">
    <location>
        <position position="112"/>
    </location>
</feature>
<feature type="active site" description="Proton acceptor" evidence="4 7">
    <location>
        <position position="116"/>
    </location>
</feature>
<feature type="binding site" evidence="3">
    <location>
        <position position="36"/>
    </location>
    <ligand>
        <name>RNA</name>
        <dbReference type="ChEBI" id="CHEBI:33697"/>
    </ligand>
    <ligandPart>
        <name>a 3'-terminal ribonucleotide 3'-phosphate residue</name>
        <dbReference type="ChEBI" id="CHEBI:83062"/>
    </ligandPart>
</feature>
<feature type="binding site" evidence="3">
    <location>
        <position position="60"/>
    </location>
    <ligand>
        <name>RNA</name>
        <dbReference type="ChEBI" id="CHEBI:33697"/>
    </ligand>
    <ligandPart>
        <name>a 3'-terminal ribonucleotide 3'-phosphate residue</name>
        <dbReference type="ChEBI" id="CHEBI:83062"/>
    </ligandPart>
</feature>
<feature type="binding site" evidence="3">
    <location>
        <begin position="98"/>
        <end position="99"/>
    </location>
    <ligand>
        <name>RNA</name>
        <dbReference type="ChEBI" id="CHEBI:33697"/>
    </ligand>
    <ligandPart>
        <name>a 3'-terminal ribonucleotide 3'-phosphate residue</name>
        <dbReference type="ChEBI" id="CHEBI:83062"/>
    </ligandPart>
</feature>
<feature type="binding site" evidence="3">
    <location>
        <position position="108"/>
    </location>
    <ligand>
        <name>RNA</name>
        <dbReference type="ChEBI" id="CHEBI:33697"/>
    </ligand>
    <ligandPart>
        <name>a 3'-terminal ribonucleotide 3'-phosphate residue</name>
        <dbReference type="ChEBI" id="CHEBI:83062"/>
    </ligandPart>
</feature>
<feature type="binding site" evidence="3">
    <location>
        <begin position="111"/>
        <end position="112"/>
    </location>
    <ligand>
        <name>RNA</name>
        <dbReference type="ChEBI" id="CHEBI:33697"/>
    </ligand>
    <ligandPart>
        <name>a 3'-terminal ribonucleotide 3'-phosphate residue</name>
        <dbReference type="ChEBI" id="CHEBI:83062"/>
    </ligandPart>
</feature>
<feature type="binding site" evidence="3">
    <location>
        <begin position="115"/>
        <end position="116"/>
    </location>
    <ligand>
        <name>RNA</name>
        <dbReference type="ChEBI" id="CHEBI:33697"/>
    </ligand>
    <ligandPart>
        <name>a 3'-terminal ribonucleotide 3'-phosphate residue</name>
        <dbReference type="ChEBI" id="CHEBI:83062"/>
    </ligandPart>
</feature>
<feature type="glycosylation site" description="N-linked (GlcNAc...) asparagine" evidence="6 9">
    <location>
        <position position="87"/>
    </location>
</feature>
<feature type="glycosylation site" description="N-linked (GlcNAc...) asparagine" evidence="6 9">
    <location>
        <position position="101"/>
    </location>
</feature>
<feature type="glycosylation site" description="N-linked (GlcNAc...) asparagine" evidence="6 9">
    <location>
        <position position="144"/>
    </location>
</feature>
<feature type="glycosylation site" description="N-linked (GlcNAc...) asparagine" evidence="6 9">
    <location>
        <position position="157"/>
    </location>
</feature>
<feature type="glycosylation site" description="N-linked (GlcNAc...) asparagine" evidence="6 9">
    <location>
        <position position="175"/>
    </location>
</feature>
<feature type="disulfide bond" evidence="4">
    <location>
        <begin position="42"/>
        <end position="49"/>
    </location>
</feature>
<feature type="disulfide bond" evidence="2">
    <location>
        <begin position="75"/>
        <end position="119"/>
    </location>
</feature>
<feature type="disulfide bond" evidence="2">
    <location>
        <begin position="183"/>
        <end position="222"/>
    </location>
</feature>
<feature type="disulfide bond" evidence="3">
    <location>
        <begin position="199"/>
        <end position="210"/>
    </location>
</feature>
<comment type="function">
    <text evidence="1">Self-incompatibility (SI) is the inherited ability of a flowering plant to prevent self-fertilization by discriminating between self and non-self pollen during pollination. In many species, self-incompatibility is controlled by the single, multiallelic locus S (By similarity).</text>
</comment>
<comment type="catalytic activity">
    <reaction evidence="7">
        <text>a ribonucleotidyl-ribonucleotide-RNA + H2O = a 3'-end 3'-phospho-ribonucleotide-RNA + a 5'-end dephospho-ribonucleoside-RNA + H(+)</text>
        <dbReference type="Rhea" id="RHEA:68052"/>
        <dbReference type="Rhea" id="RHEA-COMP:10463"/>
        <dbReference type="Rhea" id="RHEA-COMP:13936"/>
        <dbReference type="Rhea" id="RHEA-COMP:17355"/>
        <dbReference type="ChEBI" id="CHEBI:15377"/>
        <dbReference type="ChEBI" id="CHEBI:15378"/>
        <dbReference type="ChEBI" id="CHEBI:83062"/>
        <dbReference type="ChEBI" id="CHEBI:138284"/>
        <dbReference type="ChEBI" id="CHEBI:173118"/>
        <dbReference type="EC" id="4.6.1.19"/>
    </reaction>
</comment>
<comment type="PTM">
    <text evidence="9">N-linked core structure at Asn-87 and Asn-101 contains xylose and fucose or consists of disaccharide (GlcNAc-GlcNAc). N-linked core structure at Asn-144 contains xylose.</text>
</comment>
<comment type="similarity">
    <text evidence="10">Belongs to the RNase T2 family.</text>
</comment>
<dbReference type="EC" id="4.6.1.19" evidence="8"/>
<dbReference type="EMBL" id="AB002139">
    <property type="protein sequence ID" value="BAA32412.1"/>
    <property type="molecule type" value="mRNA"/>
</dbReference>
<dbReference type="SMR" id="O80322"/>
<dbReference type="iPTMnet" id="O80322"/>
<dbReference type="GO" id="GO:0005576">
    <property type="term" value="C:extracellular region"/>
    <property type="evidence" value="ECO:0007669"/>
    <property type="project" value="TreeGrafter"/>
</dbReference>
<dbReference type="GO" id="GO:0033897">
    <property type="term" value="F:ribonuclease T2 activity"/>
    <property type="evidence" value="ECO:0007669"/>
    <property type="project" value="UniProtKB-EC"/>
</dbReference>
<dbReference type="GO" id="GO:0003723">
    <property type="term" value="F:RNA binding"/>
    <property type="evidence" value="ECO:0007669"/>
    <property type="project" value="InterPro"/>
</dbReference>
<dbReference type="GO" id="GO:0006401">
    <property type="term" value="P:RNA catabolic process"/>
    <property type="evidence" value="ECO:0007669"/>
    <property type="project" value="TreeGrafter"/>
</dbReference>
<dbReference type="CDD" id="cd01061">
    <property type="entry name" value="RNase_T2_euk"/>
    <property type="match status" value="1"/>
</dbReference>
<dbReference type="Gene3D" id="3.90.730.10">
    <property type="entry name" value="Ribonuclease T2-like"/>
    <property type="match status" value="1"/>
</dbReference>
<dbReference type="InterPro" id="IPR033697">
    <property type="entry name" value="Ribonuclease_T2_eukaryotic"/>
</dbReference>
<dbReference type="InterPro" id="IPR001568">
    <property type="entry name" value="RNase_T2-like"/>
</dbReference>
<dbReference type="InterPro" id="IPR036430">
    <property type="entry name" value="RNase_T2-like_sf"/>
</dbReference>
<dbReference type="InterPro" id="IPR018188">
    <property type="entry name" value="RNase_T2_His_AS_1"/>
</dbReference>
<dbReference type="PANTHER" id="PTHR11240:SF18">
    <property type="entry name" value="OS07G0630400 PROTEIN"/>
    <property type="match status" value="1"/>
</dbReference>
<dbReference type="PANTHER" id="PTHR11240">
    <property type="entry name" value="RIBONUCLEASE T2"/>
    <property type="match status" value="1"/>
</dbReference>
<dbReference type="Pfam" id="PF00445">
    <property type="entry name" value="Ribonuclease_T2"/>
    <property type="match status" value="1"/>
</dbReference>
<dbReference type="SUPFAM" id="SSF55895">
    <property type="entry name" value="Ribonuclease Rh-like"/>
    <property type="match status" value="1"/>
</dbReference>
<dbReference type="PROSITE" id="PS00530">
    <property type="entry name" value="RNASE_T2_1"/>
    <property type="match status" value="1"/>
</dbReference>